<dbReference type="EC" id="2.3.1.43" evidence="2"/>
<dbReference type="EMBL" id="L08633">
    <property type="protein sequence ID" value="AAA35388.1"/>
    <property type="molecule type" value="mRNA"/>
</dbReference>
<dbReference type="RefSeq" id="NP_001106083.1">
    <property type="nucleotide sequence ID" value="NM_001112613.1"/>
</dbReference>
<dbReference type="SMR" id="Q08758"/>
<dbReference type="STRING" id="9555.ENSPANP00000012215"/>
<dbReference type="ESTHER" id="papan-lcat">
    <property type="family name" value="PC-sterol_acyltransferase"/>
</dbReference>
<dbReference type="GlyCosmos" id="Q08758">
    <property type="glycosylation" value="4 sites, No reported glycans"/>
</dbReference>
<dbReference type="Ensembl" id="ENSPANT00000017150.3">
    <property type="protein sequence ID" value="ENSPANP00000012215.1"/>
    <property type="gene ID" value="ENSPANG00000022341.3"/>
</dbReference>
<dbReference type="GeneID" id="100126664"/>
<dbReference type="KEGG" id="panu:100126664"/>
<dbReference type="CTD" id="3931"/>
<dbReference type="eggNOG" id="KOG2369">
    <property type="taxonomic scope" value="Eukaryota"/>
</dbReference>
<dbReference type="GeneTree" id="ENSGT00940000160052"/>
<dbReference type="HOGENOM" id="CLU_037070_1_0_1"/>
<dbReference type="OMA" id="VVNWLCY"/>
<dbReference type="OrthoDB" id="9156at314294"/>
<dbReference type="Proteomes" id="UP000028761">
    <property type="component" value="Chromosome 18"/>
</dbReference>
<dbReference type="Bgee" id="ENSPANG00000022341">
    <property type="expression patterns" value="Expressed in aorta and 64 other cell types or tissues"/>
</dbReference>
<dbReference type="GO" id="GO:0034364">
    <property type="term" value="C:high-density lipoprotein particle"/>
    <property type="evidence" value="ECO:0007669"/>
    <property type="project" value="Ensembl"/>
</dbReference>
<dbReference type="GO" id="GO:0003847">
    <property type="term" value="F:1-alkyl-2-acetylglycerophosphocholine esterase activity"/>
    <property type="evidence" value="ECO:0007669"/>
    <property type="project" value="Ensembl"/>
</dbReference>
<dbReference type="GO" id="GO:0034186">
    <property type="term" value="F:apolipoprotein A-I binding"/>
    <property type="evidence" value="ECO:0007669"/>
    <property type="project" value="Ensembl"/>
</dbReference>
<dbReference type="GO" id="GO:0004607">
    <property type="term" value="F:phosphatidylcholine-sterol O-acyltransferase activity"/>
    <property type="evidence" value="ECO:0000250"/>
    <property type="project" value="UniProtKB"/>
</dbReference>
<dbReference type="GO" id="GO:0047179">
    <property type="term" value="F:platelet-activating factor acetyltransferase activity"/>
    <property type="evidence" value="ECO:0007669"/>
    <property type="project" value="Ensembl"/>
</dbReference>
<dbReference type="GO" id="GO:0004771">
    <property type="term" value="F:sterol ester esterase activity"/>
    <property type="evidence" value="ECO:0007669"/>
    <property type="project" value="Ensembl"/>
</dbReference>
<dbReference type="GO" id="GO:0042632">
    <property type="term" value="P:cholesterol homeostasis"/>
    <property type="evidence" value="ECO:0007669"/>
    <property type="project" value="Ensembl"/>
</dbReference>
<dbReference type="GO" id="GO:0008203">
    <property type="term" value="P:cholesterol metabolic process"/>
    <property type="evidence" value="ECO:0000250"/>
    <property type="project" value="UniProtKB"/>
</dbReference>
<dbReference type="GO" id="GO:0034375">
    <property type="term" value="P:high-density lipoprotein particle remodeling"/>
    <property type="evidence" value="ECO:0007669"/>
    <property type="project" value="Ensembl"/>
</dbReference>
<dbReference type="GO" id="GO:0042158">
    <property type="term" value="P:lipoprotein biosynthetic process"/>
    <property type="evidence" value="ECO:0007669"/>
    <property type="project" value="Ensembl"/>
</dbReference>
<dbReference type="GO" id="GO:0006656">
    <property type="term" value="P:phosphatidylcholine biosynthetic process"/>
    <property type="evidence" value="ECO:0007669"/>
    <property type="project" value="Ensembl"/>
</dbReference>
<dbReference type="GO" id="GO:0046470">
    <property type="term" value="P:phosphatidylcholine metabolic process"/>
    <property type="evidence" value="ECO:0000250"/>
    <property type="project" value="UniProtKB"/>
</dbReference>
<dbReference type="GO" id="GO:0090107">
    <property type="term" value="P:regulation of high-density lipoprotein particle assembly"/>
    <property type="evidence" value="ECO:0007669"/>
    <property type="project" value="Ensembl"/>
</dbReference>
<dbReference type="GO" id="GO:0043691">
    <property type="term" value="P:reverse cholesterol transport"/>
    <property type="evidence" value="ECO:0007669"/>
    <property type="project" value="Ensembl"/>
</dbReference>
<dbReference type="GO" id="GO:0034372">
    <property type="term" value="P:very-low-density lipoprotein particle remodeling"/>
    <property type="evidence" value="ECO:0007669"/>
    <property type="project" value="Ensembl"/>
</dbReference>
<dbReference type="FunFam" id="3.40.50.1820:FF:000090">
    <property type="entry name" value="Phosphatidylcholine-sterol acyltransferase"/>
    <property type="match status" value="1"/>
</dbReference>
<dbReference type="FunFam" id="3.40.50.1820:FF:000183">
    <property type="entry name" value="Phosphatidylcholine-sterol acyltransferase"/>
    <property type="match status" value="1"/>
</dbReference>
<dbReference type="Gene3D" id="3.40.50.1820">
    <property type="entry name" value="alpha/beta hydrolase"/>
    <property type="match status" value="3"/>
</dbReference>
<dbReference type="InterPro" id="IPR029058">
    <property type="entry name" value="AB_hydrolase_fold"/>
</dbReference>
<dbReference type="InterPro" id="IPR003386">
    <property type="entry name" value="LACT/PDAT_acylTrfase"/>
</dbReference>
<dbReference type="PANTHER" id="PTHR11440">
    <property type="entry name" value="LECITHIN-CHOLESTEROL ACYLTRANSFERASE-RELATED"/>
    <property type="match status" value="1"/>
</dbReference>
<dbReference type="Pfam" id="PF02450">
    <property type="entry name" value="LCAT"/>
    <property type="match status" value="1"/>
</dbReference>
<dbReference type="SUPFAM" id="SSF53474">
    <property type="entry name" value="alpha/beta-Hydrolases"/>
    <property type="match status" value="1"/>
</dbReference>
<dbReference type="PROSITE" id="PS00120">
    <property type="entry name" value="LIPASE_SER"/>
    <property type="match status" value="1"/>
</dbReference>
<reference key="1">
    <citation type="journal article" date="1993" name="Gene">
        <title>Baboon lecithin cholesterol acyltransferase (LCAT): cDNA sequences of two alleles, evolution, and gene expression.</title>
        <authorList>
            <person name="Hixson J.E."/>
            <person name="Driscoll D.M."/>
            <person name="Birnbaum S."/>
            <person name="Britten M.L."/>
        </authorList>
    </citation>
    <scope>NUCLEOTIDE SEQUENCE [MRNA]</scope>
    <scope>TISSUE SPECIFICITY</scope>
    <source>
        <tissue>Liver</tissue>
    </source>
</reference>
<sequence length="440" mass="49645">MGPPGSPWQWVPLLLGLLLPPAAPFWLLNVLFPPHTTPKAELSNHTRPVILVPGCLGNQLEAKLDKPDVVNWMCYRKTEDFFTIWLDLNMFLPLGVDCWIDNTRVVYNRSSGLVSNAPGVQIRVPGFGKTYSVEYLDSSKLAGYLHTLVQNLVNNGYVRDETVRAAPYDWRLEPGQQEEYYHKLAGLVEEMHAAYGKPVFLIGHSLGCLHLLYFLLRQPQAWKDRFIDGFISLGAPWGGSIKPMLVLASGDNQGIPIMSSIKLKEEQRITTTSPWMFPSRLAWPEDHVFISTPSFNYTGRDFQRFFADLHFEEGWYMWLQSRDLLAGLPAPGVEVYCLYGVGLPTPRTYIYDHGFPYTDPVDVLYEDGDDTVATRSTELCGLWQGRQPQPVHLLPLRGIQHLNMVFSNQTLEHINAILLGAYRQGPPASLTASPEPPPPE</sequence>
<comment type="function">
    <text evidence="2">Central enzyme in the extracellular metabolism of plasma lipoproteins. Synthesized mainly in the liver and secreted into plasma where it converts cholesterol and phosphatidylcholines (lecithins) to cholesteryl esters and lysophosphatidylcholines on the surface of high and low density lipoproteins (HDLs and LDLs). The cholesterol ester is then transported back to the liver. Has a preference for plasma 16:0-18:2 or 18:O-18:2 phosphatidylcholines. Also produced in the brain by primary astrocytes, and esterifies free cholesterol on nascent APOE-containing lipoproteins secreted from glia and influences cerebral spinal fluid (CSF) APOE- and APOA1 levels. Together with APOE and the cholesterol transporter ABCA1, plays a key role in the maturation of glial-derived, nascent lipoproteins. Required for remodeling high-density lipoprotein particles into their spherical forms (By similarity).</text>
</comment>
<comment type="catalytic activity">
    <reaction evidence="2 4">
        <text>a sterol + a 1,2-diacyl-sn-glycero-3-phosphocholine = a sterol ester + a 1-acyl-sn-glycero-3-phosphocholine</text>
        <dbReference type="Rhea" id="RHEA:21204"/>
        <dbReference type="ChEBI" id="CHEBI:15889"/>
        <dbReference type="ChEBI" id="CHEBI:35915"/>
        <dbReference type="ChEBI" id="CHEBI:57643"/>
        <dbReference type="ChEBI" id="CHEBI:58168"/>
        <dbReference type="EC" id="2.3.1.43"/>
    </reaction>
</comment>
<comment type="activity regulation">
    <text evidence="1">APOA1 is the most potent activator in plasma. Also activated by APOE, APOC1 and APOA4 (By similarity).</text>
</comment>
<comment type="subcellular location">
    <subcellularLocation>
        <location evidence="2">Secreted</location>
    </subcellularLocation>
    <text evidence="2">Secreted into blood plasma. Produced in astrocytes and secreted into cerebral spinal fluid (CSF) (By similarity).</text>
</comment>
<comment type="tissue specificity">
    <text evidence="5">Most abundant in liver and cerebellum.</text>
</comment>
<comment type="similarity">
    <text evidence="6">Belongs to the AB hydrolase superfamily. Lipase family.</text>
</comment>
<name>LCAT_PAPAN</name>
<keyword id="KW-0012">Acyltransferase</keyword>
<keyword id="KW-0153">Cholesterol metabolism</keyword>
<keyword id="KW-1015">Disulfide bond</keyword>
<keyword id="KW-0325">Glycoprotein</keyword>
<keyword id="KW-0443">Lipid metabolism</keyword>
<keyword id="KW-1185">Reference proteome</keyword>
<keyword id="KW-0964">Secreted</keyword>
<keyword id="KW-0732">Signal</keyword>
<keyword id="KW-0753">Steroid metabolism</keyword>
<keyword id="KW-1207">Sterol metabolism</keyword>
<keyword id="KW-0808">Transferase</keyword>
<protein>
    <recommendedName>
        <fullName>Phosphatidylcholine-sterol acyltransferase</fullName>
        <ecNumber evidence="2">2.3.1.43</ecNumber>
    </recommendedName>
    <alternativeName>
        <fullName>Lecithin-cholesterol acyltransferase</fullName>
    </alternativeName>
    <alternativeName>
        <fullName>Phospholipid-cholesterol acyltransferase</fullName>
    </alternativeName>
</protein>
<accession>Q08758</accession>
<evidence type="ECO:0000250" key="1"/>
<evidence type="ECO:0000250" key="2">
    <source>
        <dbReference type="UniProtKB" id="P04180"/>
    </source>
</evidence>
<evidence type="ECO:0000255" key="3"/>
<evidence type="ECO:0000255" key="4">
    <source>
        <dbReference type="PROSITE-ProRule" id="PRU10037"/>
    </source>
</evidence>
<evidence type="ECO:0000269" key="5">
    <source>
    </source>
</evidence>
<evidence type="ECO:0000305" key="6"/>
<proteinExistence type="evidence at transcript level"/>
<feature type="signal peptide" evidence="2">
    <location>
        <begin position="1"/>
        <end position="24"/>
    </location>
</feature>
<feature type="chain" id="PRO_0000017803" description="Phosphatidylcholine-sterol acyltransferase">
    <location>
        <begin position="25"/>
        <end position="440"/>
    </location>
</feature>
<feature type="active site" description="Nucleophile" evidence="2">
    <location>
        <position position="205"/>
    </location>
</feature>
<feature type="active site" description="Charge relay system" evidence="2">
    <location>
        <position position="369"/>
    </location>
</feature>
<feature type="active site" description="Charge relay system" evidence="2">
    <location>
        <position position="401"/>
    </location>
</feature>
<feature type="site" description="Determinant for substrate specificity" evidence="2">
    <location>
        <position position="173"/>
    </location>
</feature>
<feature type="glycosylation site" description="N-linked (GlcNAc...) asparagine" evidence="3">
    <location>
        <position position="44"/>
    </location>
</feature>
<feature type="glycosylation site" description="N-linked (GlcNAc...) asparagine" evidence="3">
    <location>
        <position position="108"/>
    </location>
</feature>
<feature type="glycosylation site" description="N-linked (GlcNAc...) asparagine" evidence="3">
    <location>
        <position position="296"/>
    </location>
</feature>
<feature type="glycosylation site" description="N-linked (GlcNAc...) asparagine" evidence="3">
    <location>
        <position position="408"/>
    </location>
</feature>
<feature type="disulfide bond" evidence="2">
    <location>
        <begin position="74"/>
        <end position="98"/>
    </location>
</feature>
<feature type="disulfide bond" evidence="2">
    <location>
        <begin position="337"/>
        <end position="380"/>
    </location>
</feature>
<organism>
    <name type="scientific">Papio anubis</name>
    <name type="common">Olive baboon</name>
    <dbReference type="NCBI Taxonomy" id="9555"/>
    <lineage>
        <taxon>Eukaryota</taxon>
        <taxon>Metazoa</taxon>
        <taxon>Chordata</taxon>
        <taxon>Craniata</taxon>
        <taxon>Vertebrata</taxon>
        <taxon>Euteleostomi</taxon>
        <taxon>Mammalia</taxon>
        <taxon>Eutheria</taxon>
        <taxon>Euarchontoglires</taxon>
        <taxon>Primates</taxon>
        <taxon>Haplorrhini</taxon>
        <taxon>Catarrhini</taxon>
        <taxon>Cercopithecidae</taxon>
        <taxon>Cercopithecinae</taxon>
        <taxon>Papio</taxon>
    </lineage>
</organism>
<gene>
    <name type="primary">LCAT</name>
</gene>